<gene>
    <name type="primary">HRH4</name>
    <name type="synonym">GPCR105</name>
</gene>
<evidence type="ECO:0000255" key="1"/>
<evidence type="ECO:0000255" key="2">
    <source>
        <dbReference type="PROSITE-ProRule" id="PRU00521"/>
    </source>
</evidence>
<evidence type="ECO:0000269" key="3">
    <source>
    </source>
</evidence>
<evidence type="ECO:0000269" key="4">
    <source>
    </source>
</evidence>
<evidence type="ECO:0000269" key="5">
    <source>
    </source>
</evidence>
<evidence type="ECO:0000303" key="6">
    <source>
    </source>
</evidence>
<evidence type="ECO:0000305" key="7"/>
<evidence type="ECO:0007829" key="8">
    <source>
        <dbReference type="PDB" id="7YFD"/>
    </source>
</evidence>
<evidence type="ECO:0007829" key="9">
    <source>
        <dbReference type="PDB" id="8HOC"/>
    </source>
</evidence>
<evidence type="ECO:0007829" key="10">
    <source>
        <dbReference type="PDB" id="8YN9"/>
    </source>
</evidence>
<reference key="1">
    <citation type="journal article" date="2000" name="J. Biol. Chem.">
        <title>Molecular cloning and characterization of a novel type of histamine receptor preferentially expressed in leukocytes.</title>
        <authorList>
            <person name="Oda T."/>
            <person name="Morikawa N."/>
            <person name="Saito Y."/>
            <person name="Masuho Y."/>
            <person name="Matsumoto S."/>
        </authorList>
    </citation>
    <scope>NUCLEOTIDE SEQUENCE [MRNA] (ISOFORM 1)</scope>
    <scope>VARIANTS VAL-138 AND ARG-206</scope>
</reference>
<reference key="2">
    <citation type="journal article" date="2000" name="Biochem. Biophys. Res. Commun.">
        <title>Molecular cloning and characterization of a new human histamine receptor, HH4R.</title>
        <authorList>
            <person name="Nakamura T."/>
            <person name="Itadani H."/>
            <person name="Hidaka Y."/>
            <person name="Ohta M."/>
            <person name="Tanaka K."/>
        </authorList>
    </citation>
    <scope>NUCLEOTIDE SEQUENCE [MRNA] (ISOFORM 1)</scope>
    <scope>CHARACTERIZATION</scope>
    <source>
        <tissue>Leukocyte</tissue>
    </source>
</reference>
<reference key="3">
    <citation type="submission" date="2000-09" db="EMBL/GenBank/DDBJ databases">
        <title>Cloning of a novel histamine receptor.</title>
        <authorList>
            <person name="Jones P.G."/>
            <person name="Wu S."/>
            <person name="Betty M."/>
        </authorList>
    </citation>
    <scope>NUCLEOTIDE SEQUENCE [MRNA] (ISOFORM 1)</scope>
</reference>
<reference key="4">
    <citation type="journal article" date="2001" name="Mol. Pharmacol.">
        <title>Cloning and pharmacological characterization of a fourth histamine receptor (H4) expressed in bone marrow.</title>
        <authorList>
            <person name="Liu C."/>
            <person name="Ma X.-J."/>
            <person name="Jiang X."/>
            <person name="Wilson S.J."/>
            <person name="Hofstra C.L."/>
            <person name="Blevitt J."/>
            <person name="Pyati J."/>
            <person name="Li X."/>
            <person name="Chai W."/>
            <person name="Carruthers N."/>
            <person name="Lovenberg T.W."/>
        </authorList>
    </citation>
    <scope>NUCLEOTIDE SEQUENCE [MRNA] (ISOFORM 1)</scope>
    <scope>CHARACTERIZATION</scope>
    <source>
        <tissue>Bone marrow</tissue>
    </source>
</reference>
<reference key="5">
    <citation type="journal article" date="2001" name="J. Pharmacol. Exp. Ther.">
        <title>Cloning and characterization of a novel human histamine receptor.</title>
        <authorList>
            <person name="Morse K.L."/>
            <person name="Behan J."/>
            <person name="Laz T.M."/>
            <person name="West R.E. Jr."/>
            <person name="Greenfeder S.A."/>
            <person name="Anthes J.C."/>
            <person name="Umland S."/>
            <person name="Wan Y."/>
            <person name="Hipkin R.W."/>
            <person name="Gonsiorek W."/>
            <person name="Shin N."/>
            <person name="Gustafson E.L."/>
            <person name="Qiao X."/>
            <person name="Wang S."/>
            <person name="Hedrick J.A."/>
            <person name="Greene J."/>
            <person name="Bayne M."/>
            <person name="Monsma F.J. Jr."/>
        </authorList>
    </citation>
    <scope>NUCLEOTIDE SEQUENCE [MRNA] (ISOFORM 1)</scope>
    <scope>CHARACTERIZATION</scope>
    <source>
        <tissue>Eosinophil</tissue>
    </source>
</reference>
<reference key="6">
    <citation type="journal article" date="2001" name="Mol. Pharmacol.">
        <title>Cloning, expression, and pharmacological characterization of a novel human histamine receptor.</title>
        <authorList>
            <person name="Zhu Y."/>
            <person name="Michalovich D."/>
            <person name="Wu H.-L."/>
            <person name="Tan K.B."/>
            <person name="Dytko G.M."/>
            <person name="Mannan I.J."/>
            <person name="Boyce R."/>
            <person name="Alston J."/>
            <person name="Tierney L.A."/>
            <person name="Li X."/>
            <person name="Herrity N.C."/>
            <person name="Vawter L."/>
            <person name="Sarau H.M."/>
            <person name="Ames R.S."/>
            <person name="Davenport C.M."/>
            <person name="Hieble P."/>
            <person name="Wilson S."/>
            <person name="Bergsma D.J."/>
            <person name="Fitzgerald L.R."/>
        </authorList>
    </citation>
    <scope>NUCLEOTIDE SEQUENCE [MRNA] (ISOFORM 1)</scope>
</reference>
<reference key="7">
    <citation type="journal article" date="2002" name="J. Recept. Signal Transduct.">
        <title>Identification of a histamine H4 receptor on human eosinophils --role in eosinophil chemotaxis.</title>
        <authorList>
            <person name="O'Reilly M.A."/>
            <person name="Alpert R."/>
            <person name="Jenkinson S."/>
            <person name="Gladue R.P."/>
            <person name="Foo S."/>
            <person name="Trim S."/>
            <person name="Peter B."/>
            <person name="Trevethick M."/>
            <person name="Fidock M."/>
        </authorList>
    </citation>
    <scope>NUCLEOTIDE SEQUENCE [MRNA] (ISOFORM 1)</scope>
    <scope>FUNCTION</scope>
    <scope>TISSUE SPECIFICITY</scope>
</reference>
<reference key="8">
    <citation type="journal article" date="2008" name="Biochem. J.">
        <title>Cloning and characterization of dominant negative splice variants of the human histamine H4 receptor.</title>
        <authorList>
            <person name="van Rijn R.M."/>
            <person name="van Marle A."/>
            <person name="Chazot P.L."/>
            <person name="Langemeijer E."/>
            <person name="Qin Y."/>
            <person name="Shenton F.C."/>
            <person name="Lim H.D."/>
            <person name="Zuiderveld O.P."/>
            <person name="Sansuk K."/>
            <person name="Dy M."/>
            <person name="Smit M.J."/>
            <person name="Tensen C.P."/>
            <person name="Bakker R.A."/>
            <person name="Leurs R."/>
        </authorList>
    </citation>
    <scope>NUCLEOTIDE SEQUENCE [MRNA] (ISOFORM 2)</scope>
    <source>
        <tissue>Umbilical cord blood</tissue>
    </source>
</reference>
<reference key="9">
    <citation type="submission" date="2002-07" db="EMBL/GenBank/DDBJ databases">
        <title>cDNA clones of human proteins involved in signal transduction sequenced by the Guthrie cDNA resource center (www.cdna.org).</title>
        <authorList>
            <person name="Puhl H.L. III"/>
            <person name="Ikeda S.R."/>
            <person name="Aronstam R.S."/>
        </authorList>
    </citation>
    <scope>NUCLEOTIDE SEQUENCE [LARGE SCALE MRNA] (ISOFORM 1)</scope>
</reference>
<reference key="10">
    <citation type="submission" date="2007-02" db="EMBL/GenBank/DDBJ databases">
        <authorList>
            <consortium name="NHLBI resequencing and genotyping service (RS&amp;G)"/>
        </authorList>
    </citation>
    <scope>NUCLEOTIDE SEQUENCE [GENOMIC DNA]</scope>
</reference>
<reference key="11">
    <citation type="journal article" date="2005" name="Nature">
        <title>DNA sequence and analysis of human chromosome 18.</title>
        <authorList>
            <person name="Nusbaum C."/>
            <person name="Zody M.C."/>
            <person name="Borowsky M.L."/>
            <person name="Kamal M."/>
            <person name="Kodira C.D."/>
            <person name="Taylor T.D."/>
            <person name="Whittaker C.A."/>
            <person name="Chang J.L."/>
            <person name="Cuomo C.A."/>
            <person name="Dewar K."/>
            <person name="FitzGerald M.G."/>
            <person name="Yang X."/>
            <person name="Abouelleil A."/>
            <person name="Allen N.R."/>
            <person name="Anderson S."/>
            <person name="Bloom T."/>
            <person name="Bugalter B."/>
            <person name="Butler J."/>
            <person name="Cook A."/>
            <person name="DeCaprio D."/>
            <person name="Engels R."/>
            <person name="Garber M."/>
            <person name="Gnirke A."/>
            <person name="Hafez N."/>
            <person name="Hall J.L."/>
            <person name="Norman C.H."/>
            <person name="Itoh T."/>
            <person name="Jaffe D.B."/>
            <person name="Kuroki Y."/>
            <person name="Lehoczky J."/>
            <person name="Lui A."/>
            <person name="Macdonald P."/>
            <person name="Mauceli E."/>
            <person name="Mikkelsen T.S."/>
            <person name="Naylor J.W."/>
            <person name="Nicol R."/>
            <person name="Nguyen C."/>
            <person name="Noguchi H."/>
            <person name="O'Leary S.B."/>
            <person name="Piqani B."/>
            <person name="Smith C.L."/>
            <person name="Talamas J.A."/>
            <person name="Topham K."/>
            <person name="Totoki Y."/>
            <person name="Toyoda A."/>
            <person name="Wain H.M."/>
            <person name="Young S.K."/>
            <person name="Zeng Q."/>
            <person name="Zimmer A.R."/>
            <person name="Fujiyama A."/>
            <person name="Hattori M."/>
            <person name="Birren B.W."/>
            <person name="Sakaki Y."/>
            <person name="Lander E.S."/>
        </authorList>
    </citation>
    <scope>NUCLEOTIDE SEQUENCE [LARGE SCALE GENOMIC DNA]</scope>
</reference>
<reference key="12">
    <citation type="submission" date="2005-07" db="EMBL/GenBank/DDBJ databases">
        <authorList>
            <person name="Mural R.J."/>
            <person name="Istrail S."/>
            <person name="Sutton G.G."/>
            <person name="Florea L."/>
            <person name="Halpern A.L."/>
            <person name="Mobarry C.M."/>
            <person name="Lippert R."/>
            <person name="Walenz B."/>
            <person name="Shatkay H."/>
            <person name="Dew I."/>
            <person name="Miller J.R."/>
            <person name="Flanigan M.J."/>
            <person name="Edwards N.J."/>
            <person name="Bolanos R."/>
            <person name="Fasulo D."/>
            <person name="Halldorsson B.V."/>
            <person name="Hannenhalli S."/>
            <person name="Turner R."/>
            <person name="Yooseph S."/>
            <person name="Lu F."/>
            <person name="Nusskern D.R."/>
            <person name="Shue B.C."/>
            <person name="Zheng X.H."/>
            <person name="Zhong F."/>
            <person name="Delcher A.L."/>
            <person name="Huson D.H."/>
            <person name="Kravitz S.A."/>
            <person name="Mouchard L."/>
            <person name="Reinert K."/>
            <person name="Remington K.A."/>
            <person name="Clark A.G."/>
            <person name="Waterman M.S."/>
            <person name="Eichler E.E."/>
            <person name="Adams M.D."/>
            <person name="Hunkapiller M.W."/>
            <person name="Myers E.W."/>
            <person name="Venter J.C."/>
        </authorList>
    </citation>
    <scope>NUCLEOTIDE SEQUENCE [LARGE SCALE GENOMIC DNA]</scope>
</reference>
<reference key="13">
    <citation type="journal article" date="2004" name="Genome Res.">
        <title>The status, quality, and expansion of the NIH full-length cDNA project: the Mammalian Gene Collection (MGC).</title>
        <authorList>
            <consortium name="The MGC Project Team"/>
        </authorList>
    </citation>
    <scope>NUCLEOTIDE SEQUENCE [LARGE SCALE MRNA] (ISOFORM 1)</scope>
</reference>
<reference key="14">
    <citation type="journal article" date="2021" name="Biomolecules">
        <title>Identification of TSPAN4 as Novel Histamine H4 Receptor Interactor.</title>
        <authorList>
            <person name="Ma X."/>
            <person name="Verweij E.W.E."/>
            <person name="Siderius M."/>
            <person name="Leurs R."/>
            <person name="Vischer H.F."/>
        </authorList>
    </citation>
    <scope>INTERACTION WITH TSPAN4</scope>
    <scope>SUBCELLULAR LOCATION</scope>
</reference>
<name>HRH4_HUMAN</name>
<organism>
    <name type="scientific">Homo sapiens</name>
    <name type="common">Human</name>
    <dbReference type="NCBI Taxonomy" id="9606"/>
    <lineage>
        <taxon>Eukaryota</taxon>
        <taxon>Metazoa</taxon>
        <taxon>Chordata</taxon>
        <taxon>Craniata</taxon>
        <taxon>Vertebrata</taxon>
        <taxon>Euteleostomi</taxon>
        <taxon>Mammalia</taxon>
        <taxon>Eutheria</taxon>
        <taxon>Euarchontoglires</taxon>
        <taxon>Primates</taxon>
        <taxon>Haplorrhini</taxon>
        <taxon>Catarrhini</taxon>
        <taxon>Hominidae</taxon>
        <taxon>Homo</taxon>
    </lineage>
</organism>
<accession>Q9H3N8</accession>
<accession>B0YJ19</accession>
<accession>B2KJ48</accession>
<accession>Q4G0I6</accession>
<accession>Q9GZQ0</accession>
<protein>
    <recommendedName>
        <fullName>Histamine H4 receptor</fullName>
        <shortName>H4R</shortName>
        <shortName>HH4R</shortName>
    </recommendedName>
    <alternativeName>
        <fullName>AXOR35</fullName>
    </alternativeName>
    <alternativeName>
        <fullName>G-protein coupled receptor 105</fullName>
    </alternativeName>
    <alternativeName>
        <fullName>GPRv53</fullName>
    </alternativeName>
    <alternativeName>
        <fullName>Pfi-013</fullName>
    </alternativeName>
    <alternativeName>
        <fullName>SP9144</fullName>
    </alternativeName>
</protein>
<proteinExistence type="evidence at protein level"/>
<keyword id="KW-0002">3D-structure</keyword>
<keyword id="KW-0025">Alternative splicing</keyword>
<keyword id="KW-1003">Cell membrane</keyword>
<keyword id="KW-1015">Disulfide bond</keyword>
<keyword id="KW-0297">G-protein coupled receptor</keyword>
<keyword id="KW-0325">Glycoprotein</keyword>
<keyword id="KW-0472">Membrane</keyword>
<keyword id="KW-1267">Proteomics identification</keyword>
<keyword id="KW-0675">Receptor</keyword>
<keyword id="KW-1185">Reference proteome</keyword>
<keyword id="KW-0807">Transducer</keyword>
<keyword id="KW-0812">Transmembrane</keyword>
<keyword id="KW-1133">Transmembrane helix</keyword>
<comment type="function">
    <text evidence="4">The H4 subclass of histamine receptors could mediate the histamine signals in peripheral tissues. Displays a significant level of constitutive activity (spontaneous activity in the absence of agonist).</text>
</comment>
<comment type="subunit">
    <text evidence="5">Interacts with TSPAN4.</text>
</comment>
<comment type="subcellular location">
    <subcellularLocation>
        <location evidence="5">Cell membrane</location>
        <topology>Multi-pass membrane protein</topology>
    </subcellularLocation>
</comment>
<comment type="alternative products">
    <event type="alternative splicing"/>
    <isoform>
        <id>Q9H3N8-1</id>
        <name>1</name>
        <sequence type="displayed"/>
    </isoform>
    <isoform>
        <id>Q9H3N8-2</id>
        <name>2</name>
        <sequence type="described" ref="VSP_042737"/>
    </isoform>
</comment>
<comment type="tissue specificity">
    <text evidence="4">Expressed primarily in the bone marrow and eosinophils. Shows preferential distribution in cells of immunological relevance such as T-cells, dendritic cells, monocytes, mast cells, neutrophils. Also expressed in a wide variety of peripheral tissues, including the heart, kidney, liver, lung, pancreas, skeletal muscle, prostate, small intestine, spleen, testis, colon, fetal liver and lymph node.</text>
</comment>
<comment type="induction">
    <text>Expression is either up-regulated or down-regulated upon activation of the lymphoid tissues and this regulation may depend on the presence of IL10/interleukin-10 or IL13/interleukin-13.</text>
</comment>
<comment type="miscellaneous">
    <text>Does not bind diphenhydramine, loratadine, ranitidine, cimetidine and chlorpheniramine. Shows modest affinity for dimaprit, impromidine, clobenpropit, thioperamide, burimamide clozapine, immepip and imetit. The order of inhibitory activity was imetit &gt; clobenpropit &gt; burimamide &gt; thioperamide. Clobenpropit behaves as a partial agonist, dimaprit and impromidine show some agonist activity while clozapine behaves as a full agonist. Thioperamide shows inverse agonism (enhances cAMP activity). The order of inhibitory activity of histamine derivatives was Histamine &gt; N-alpha-methylhistamine &gt; R(-)-alpha-methylhistamine &gt; S(+)-alpha-methylhistamine. Both N-alpha-methylhistamine &gt; R(-)-alpha-methylhistamine behave as full agonists.</text>
</comment>
<comment type="similarity">
    <text evidence="2">Belongs to the G-protein coupled receptor 1 family.</text>
</comment>
<dbReference type="EMBL" id="AB044934">
    <property type="protein sequence ID" value="BAB13698.1"/>
    <property type="molecule type" value="mRNA"/>
</dbReference>
<dbReference type="EMBL" id="AB045370">
    <property type="protein sequence ID" value="BAB20091.1"/>
    <property type="molecule type" value="mRNA"/>
</dbReference>
<dbReference type="EMBL" id="AF307973">
    <property type="protein sequence ID" value="AAG32052.1"/>
    <property type="molecule type" value="mRNA"/>
</dbReference>
<dbReference type="EMBL" id="AF312230">
    <property type="protein sequence ID" value="AAK12081.1"/>
    <property type="molecule type" value="mRNA"/>
</dbReference>
<dbReference type="EMBL" id="AF329449">
    <property type="protein sequence ID" value="AAK43542.1"/>
    <property type="molecule type" value="mRNA"/>
</dbReference>
<dbReference type="EMBL" id="AF325356">
    <property type="protein sequence ID" value="AAL01684.1"/>
    <property type="molecule type" value="mRNA"/>
</dbReference>
<dbReference type="EMBL" id="AJ298292">
    <property type="protein sequence ID" value="CAC83493.1"/>
    <property type="molecule type" value="mRNA"/>
</dbReference>
<dbReference type="EMBL" id="DQ835186">
    <property type="protein sequence ID" value="ABI54174.1"/>
    <property type="molecule type" value="mRNA"/>
</dbReference>
<dbReference type="EMBL" id="AY136745">
    <property type="protein sequence ID" value="AAN01271.1"/>
    <property type="molecule type" value="mRNA"/>
</dbReference>
<dbReference type="EMBL" id="EF444982">
    <property type="protein sequence ID" value="ACA05997.1"/>
    <property type="molecule type" value="Genomic_DNA"/>
</dbReference>
<dbReference type="EMBL" id="AC007922">
    <property type="status" value="NOT_ANNOTATED_CDS"/>
    <property type="molecule type" value="Genomic_DNA"/>
</dbReference>
<dbReference type="EMBL" id="CH471088">
    <property type="protein sequence ID" value="EAX01189.1"/>
    <property type="molecule type" value="Genomic_DNA"/>
</dbReference>
<dbReference type="EMBL" id="BC069136">
    <property type="protein sequence ID" value="AAH69136.1"/>
    <property type="molecule type" value="mRNA"/>
</dbReference>
<dbReference type="EMBL" id="BC112348">
    <property type="protein sequence ID" value="AAI12349.1"/>
    <property type="molecule type" value="mRNA"/>
</dbReference>
<dbReference type="CCDS" id="CCDS11887.1">
    <molecule id="Q9H3N8-1"/>
</dbReference>
<dbReference type="CCDS" id="CCDS45841.1">
    <molecule id="Q9H3N8-2"/>
</dbReference>
<dbReference type="PIR" id="JC7566">
    <property type="entry name" value="JC7566"/>
</dbReference>
<dbReference type="RefSeq" id="NP_001137300.1">
    <molecule id="Q9H3N8-2"/>
    <property type="nucleotide sequence ID" value="NM_001143828.2"/>
</dbReference>
<dbReference type="RefSeq" id="NP_001153638.1">
    <property type="nucleotide sequence ID" value="NM_001160166.1"/>
</dbReference>
<dbReference type="RefSeq" id="NP_067637.2">
    <molecule id="Q9H3N8-1"/>
    <property type="nucleotide sequence ID" value="NM_021624.3"/>
</dbReference>
<dbReference type="PDB" id="7YFC">
    <property type="method" value="EM"/>
    <property type="resolution" value="3.00 A"/>
    <property type="chains" value="R=1-390"/>
</dbReference>
<dbReference type="PDB" id="7YFD">
    <property type="method" value="EM"/>
    <property type="resolution" value="3.10 A"/>
    <property type="chains" value="R=1-390"/>
</dbReference>
<dbReference type="PDB" id="8HN8">
    <property type="method" value="EM"/>
    <property type="resolution" value="3.00 A"/>
    <property type="chains" value="R=4-390"/>
</dbReference>
<dbReference type="PDB" id="8HOC">
    <property type="method" value="EM"/>
    <property type="resolution" value="3.00 A"/>
    <property type="chains" value="R=4-390"/>
</dbReference>
<dbReference type="PDB" id="8JXT">
    <property type="method" value="EM"/>
    <property type="resolution" value="3.07 A"/>
    <property type="chains" value="R=1-390"/>
</dbReference>
<dbReference type="PDB" id="8JXV">
    <property type="method" value="EM"/>
    <property type="resolution" value="3.21 A"/>
    <property type="chains" value="R=1-390"/>
</dbReference>
<dbReference type="PDB" id="8JXW">
    <property type="method" value="EM"/>
    <property type="resolution" value="3.01 A"/>
    <property type="chains" value="R=1-390"/>
</dbReference>
<dbReference type="PDB" id="8JXX">
    <property type="method" value="EM"/>
    <property type="resolution" value="3.06 A"/>
    <property type="chains" value="R=1-390"/>
</dbReference>
<dbReference type="PDB" id="8YN9">
    <property type="method" value="EM"/>
    <property type="resolution" value="2.30 A"/>
    <property type="chains" value="R=1-382"/>
</dbReference>
<dbReference type="PDB" id="8YNA">
    <property type="method" value="EM"/>
    <property type="resolution" value="2.63 A"/>
    <property type="chains" value="R=1-382"/>
</dbReference>
<dbReference type="PDBsum" id="7YFC"/>
<dbReference type="PDBsum" id="7YFD"/>
<dbReference type="PDBsum" id="8HN8"/>
<dbReference type="PDBsum" id="8HOC"/>
<dbReference type="PDBsum" id="8JXT"/>
<dbReference type="PDBsum" id="8JXV"/>
<dbReference type="PDBsum" id="8JXW"/>
<dbReference type="PDBsum" id="8JXX"/>
<dbReference type="PDBsum" id="8YN9"/>
<dbReference type="PDBsum" id="8YNA"/>
<dbReference type="EMDB" id="EMD-33785"/>
<dbReference type="EMDB" id="EMD-33786"/>
<dbReference type="EMDB" id="EMD-34908"/>
<dbReference type="EMDB" id="EMD-34925"/>
<dbReference type="EMDB" id="EMD-36712"/>
<dbReference type="EMDB" id="EMD-36714"/>
<dbReference type="EMDB" id="EMD-36715"/>
<dbReference type="EMDB" id="EMD-36716"/>
<dbReference type="EMDB" id="EMD-39419"/>
<dbReference type="EMDB" id="EMD-39420"/>
<dbReference type="SMR" id="Q9H3N8"/>
<dbReference type="BioGRID" id="121882">
    <property type="interactions" value="1"/>
</dbReference>
<dbReference type="CORUM" id="Q9H3N8"/>
<dbReference type="FunCoup" id="Q9H3N8">
    <property type="interactions" value="519"/>
</dbReference>
<dbReference type="STRING" id="9606.ENSP00000256906"/>
<dbReference type="BindingDB" id="Q9H3N8"/>
<dbReference type="ChEMBL" id="CHEMBL3759"/>
<dbReference type="DrugBank" id="DB15027">
    <property type="generic name" value="Adriforant"/>
</dbReference>
<dbReference type="DrugBank" id="DB00321">
    <property type="generic name" value="Amitriptyline"/>
</dbReference>
<dbReference type="DrugBank" id="DB00543">
    <property type="generic name" value="Amoxapine"/>
</dbReference>
<dbReference type="DrugBank" id="DB01238">
    <property type="generic name" value="Aripiprazole"/>
</dbReference>
<dbReference type="DrugBank" id="DB00477">
    <property type="generic name" value="Chlorpromazine"/>
</dbReference>
<dbReference type="DrugBank" id="DB00363">
    <property type="generic name" value="Clozapine"/>
</dbReference>
<dbReference type="DrugBank" id="DB01142">
    <property type="generic name" value="Doxepin"/>
</dbReference>
<dbReference type="DrugBank" id="DB05381">
    <property type="generic name" value="Histamine"/>
</dbReference>
<dbReference type="DrugBank" id="DB00408">
    <property type="generic name" value="Loxapine"/>
</dbReference>
<dbReference type="DrugBank" id="DB06148">
    <property type="generic name" value="Mianserin"/>
</dbReference>
<dbReference type="DrugBank" id="DB01620">
    <property type="generic name" value="Pheniramine"/>
</dbReference>
<dbReference type="DrugBank" id="DB05032">
    <property type="generic name" value="REV131"/>
</dbReference>
<dbReference type="DrugBank" id="DB12522">
    <property type="generic name" value="Toreforant"/>
</dbReference>
<dbReference type="DrugCentral" id="Q9H3N8"/>
<dbReference type="GuidetoPHARMACOLOGY" id="265"/>
<dbReference type="GlyCosmos" id="Q9H3N8">
    <property type="glycosylation" value="2 sites, No reported glycans"/>
</dbReference>
<dbReference type="GlyGen" id="Q9H3N8">
    <property type="glycosylation" value="3 sites, 1 O-linked glycan (1 site)"/>
</dbReference>
<dbReference type="iPTMnet" id="Q9H3N8"/>
<dbReference type="PhosphoSitePlus" id="Q9H3N8"/>
<dbReference type="BioMuta" id="HRH4"/>
<dbReference type="DMDM" id="14194819"/>
<dbReference type="jPOST" id="Q9H3N8"/>
<dbReference type="PaxDb" id="9606-ENSP00000256906"/>
<dbReference type="PeptideAtlas" id="Q9H3N8"/>
<dbReference type="ProteomicsDB" id="80734">
    <molecule id="Q9H3N8-1"/>
</dbReference>
<dbReference type="ProteomicsDB" id="80735">
    <molecule id="Q9H3N8-2"/>
</dbReference>
<dbReference type="Antibodypedia" id="7806">
    <property type="antibodies" value="282 antibodies from 30 providers"/>
</dbReference>
<dbReference type="DNASU" id="59340"/>
<dbReference type="Ensembl" id="ENST00000256906.5">
    <molecule id="Q9H3N8-1"/>
    <property type="protein sequence ID" value="ENSP00000256906.4"/>
    <property type="gene ID" value="ENSG00000134489.7"/>
</dbReference>
<dbReference type="Ensembl" id="ENST00000426880.2">
    <molecule id="Q9H3N8-2"/>
    <property type="protein sequence ID" value="ENSP00000402526.2"/>
    <property type="gene ID" value="ENSG00000134489.7"/>
</dbReference>
<dbReference type="GeneID" id="59340"/>
<dbReference type="KEGG" id="hsa:59340"/>
<dbReference type="MANE-Select" id="ENST00000256906.5">
    <property type="protein sequence ID" value="ENSP00000256906.4"/>
    <property type="RefSeq nucleotide sequence ID" value="NM_021624.4"/>
    <property type="RefSeq protein sequence ID" value="NP_067637.2"/>
</dbReference>
<dbReference type="UCSC" id="uc002kvi.3">
    <molecule id="Q9H3N8-1"/>
    <property type="organism name" value="human"/>
</dbReference>
<dbReference type="AGR" id="HGNC:17383"/>
<dbReference type="CTD" id="59340"/>
<dbReference type="DisGeNET" id="59340"/>
<dbReference type="GeneCards" id="HRH4"/>
<dbReference type="HGNC" id="HGNC:17383">
    <property type="gene designation" value="HRH4"/>
</dbReference>
<dbReference type="HPA" id="ENSG00000134489">
    <property type="expression patterns" value="Not detected"/>
</dbReference>
<dbReference type="MIM" id="606792">
    <property type="type" value="gene"/>
</dbReference>
<dbReference type="neXtProt" id="NX_Q9H3N8"/>
<dbReference type="OpenTargets" id="ENSG00000134489"/>
<dbReference type="PharmGKB" id="PA134982275"/>
<dbReference type="VEuPathDB" id="HostDB:ENSG00000134489"/>
<dbReference type="eggNOG" id="KOG3656">
    <property type="taxonomic scope" value="Eukaryota"/>
</dbReference>
<dbReference type="GeneTree" id="ENSGT00940000162118"/>
<dbReference type="HOGENOM" id="CLU_009579_11_2_1"/>
<dbReference type="InParanoid" id="Q9H3N8"/>
<dbReference type="OMA" id="CVFWLIT"/>
<dbReference type="OrthoDB" id="10071887at2759"/>
<dbReference type="PAN-GO" id="Q9H3N8">
    <property type="GO annotations" value="9 GO annotations based on evolutionary models"/>
</dbReference>
<dbReference type="PhylomeDB" id="Q9H3N8"/>
<dbReference type="TreeFam" id="TF351747"/>
<dbReference type="PathwayCommons" id="Q9H3N8"/>
<dbReference type="Reactome" id="R-HSA-390650">
    <property type="pathway name" value="Histamine receptors"/>
</dbReference>
<dbReference type="Reactome" id="R-HSA-418594">
    <property type="pathway name" value="G alpha (i) signalling events"/>
</dbReference>
<dbReference type="SignaLink" id="Q9H3N8"/>
<dbReference type="SIGNOR" id="Q9H3N8"/>
<dbReference type="BioGRID-ORCS" id="59340">
    <property type="hits" value="17 hits in 1145 CRISPR screens"/>
</dbReference>
<dbReference type="GeneWiki" id="Histamine_H4_receptor"/>
<dbReference type="GenomeRNAi" id="59340"/>
<dbReference type="Pharos" id="Q9H3N8">
    <property type="development level" value="Tchem"/>
</dbReference>
<dbReference type="PRO" id="PR:Q9H3N8"/>
<dbReference type="Proteomes" id="UP000005640">
    <property type="component" value="Chromosome 18"/>
</dbReference>
<dbReference type="RNAct" id="Q9H3N8">
    <property type="molecule type" value="protein"/>
</dbReference>
<dbReference type="Bgee" id="ENSG00000134489">
    <property type="expression patterns" value="Expressed in monocyte and 41 other cell types or tissues"/>
</dbReference>
<dbReference type="GO" id="GO:0030425">
    <property type="term" value="C:dendrite"/>
    <property type="evidence" value="ECO:0000318"/>
    <property type="project" value="GO_Central"/>
</dbReference>
<dbReference type="GO" id="GO:0005886">
    <property type="term" value="C:plasma membrane"/>
    <property type="evidence" value="ECO:0000318"/>
    <property type="project" value="GO_Central"/>
</dbReference>
<dbReference type="GO" id="GO:0045202">
    <property type="term" value="C:synapse"/>
    <property type="evidence" value="ECO:0000318"/>
    <property type="project" value="GO_Central"/>
</dbReference>
<dbReference type="GO" id="GO:0004969">
    <property type="term" value="F:histamine receptor activity"/>
    <property type="evidence" value="ECO:0000318"/>
    <property type="project" value="GO_Central"/>
</dbReference>
<dbReference type="GO" id="GO:0030594">
    <property type="term" value="F:neurotransmitter receptor activity"/>
    <property type="evidence" value="ECO:0000318"/>
    <property type="project" value="GO_Central"/>
</dbReference>
<dbReference type="GO" id="GO:0007197">
    <property type="term" value="P:adenylate cyclase-inhibiting G protein-coupled acetylcholine receptor signaling pathway"/>
    <property type="evidence" value="ECO:0000318"/>
    <property type="project" value="GO_Central"/>
</dbReference>
<dbReference type="GO" id="GO:0007268">
    <property type="term" value="P:chemical synaptic transmission"/>
    <property type="evidence" value="ECO:0000318"/>
    <property type="project" value="GO_Central"/>
</dbReference>
<dbReference type="GO" id="GO:0007187">
    <property type="term" value="P:G protein-coupled receptor signaling pathway, coupled to cyclic nucleotide second messenger"/>
    <property type="evidence" value="ECO:0000318"/>
    <property type="project" value="GO_Central"/>
</dbReference>
<dbReference type="GO" id="GO:0006954">
    <property type="term" value="P:inflammatory response"/>
    <property type="evidence" value="ECO:0007669"/>
    <property type="project" value="InterPro"/>
</dbReference>
<dbReference type="GO" id="GO:0007204">
    <property type="term" value="P:positive regulation of cytosolic calcium ion concentration"/>
    <property type="evidence" value="ECO:0007669"/>
    <property type="project" value="InterPro"/>
</dbReference>
<dbReference type="GO" id="GO:0043408">
    <property type="term" value="P:regulation of MAPK cascade"/>
    <property type="evidence" value="ECO:0007669"/>
    <property type="project" value="InterPro"/>
</dbReference>
<dbReference type="CDD" id="cd15295">
    <property type="entry name" value="7tmA_Histamine_H4R"/>
    <property type="match status" value="1"/>
</dbReference>
<dbReference type="FunFam" id="1.20.1070.10:FF:000257">
    <property type="entry name" value="Histamine H4 receptor"/>
    <property type="match status" value="1"/>
</dbReference>
<dbReference type="Gene3D" id="1.20.1070.10">
    <property type="entry name" value="Rhodopsin 7-helix transmembrane proteins"/>
    <property type="match status" value="1"/>
</dbReference>
<dbReference type="InterPro" id="IPR000276">
    <property type="entry name" value="GPCR_Rhodpsn"/>
</dbReference>
<dbReference type="InterPro" id="IPR017452">
    <property type="entry name" value="GPCR_Rhodpsn_7TM"/>
</dbReference>
<dbReference type="InterPro" id="IPR008102">
    <property type="entry name" value="Histamine_H4_rcpt"/>
</dbReference>
<dbReference type="PANTHER" id="PTHR24247">
    <property type="entry name" value="5-HYDROXYTRYPTAMINE RECEPTOR"/>
    <property type="match status" value="1"/>
</dbReference>
<dbReference type="PANTHER" id="PTHR24247:SF199">
    <property type="entry name" value="HISTAMINE H4 RECEPTOR"/>
    <property type="match status" value="1"/>
</dbReference>
<dbReference type="Pfam" id="PF00001">
    <property type="entry name" value="7tm_1"/>
    <property type="match status" value="1"/>
</dbReference>
<dbReference type="PRINTS" id="PR00237">
    <property type="entry name" value="GPCRRHODOPSN"/>
</dbReference>
<dbReference type="PRINTS" id="PR01726">
    <property type="entry name" value="HISTAMINEH4R"/>
</dbReference>
<dbReference type="SUPFAM" id="SSF81321">
    <property type="entry name" value="Family A G protein-coupled receptor-like"/>
    <property type="match status" value="1"/>
</dbReference>
<dbReference type="PROSITE" id="PS00237">
    <property type="entry name" value="G_PROTEIN_RECEP_F1_1"/>
    <property type="match status" value="1"/>
</dbReference>
<dbReference type="PROSITE" id="PS50262">
    <property type="entry name" value="G_PROTEIN_RECEP_F1_2"/>
    <property type="match status" value="1"/>
</dbReference>
<feature type="chain" id="PRO_0000069693" description="Histamine H4 receptor">
    <location>
        <begin position="1"/>
        <end position="390"/>
    </location>
</feature>
<feature type="topological domain" description="Extracellular" evidence="1">
    <location>
        <begin position="1"/>
        <end position="19"/>
    </location>
</feature>
<feature type="transmembrane region" description="Helical; Name=1" evidence="1">
    <location>
        <begin position="20"/>
        <end position="40"/>
    </location>
</feature>
<feature type="topological domain" description="Cytoplasmic" evidence="1">
    <location>
        <begin position="41"/>
        <end position="52"/>
    </location>
</feature>
<feature type="transmembrane region" description="Helical; Name=2" evidence="1">
    <location>
        <begin position="53"/>
        <end position="73"/>
    </location>
</feature>
<feature type="topological domain" description="Extracellular" evidence="1">
    <location>
        <begin position="74"/>
        <end position="87"/>
    </location>
</feature>
<feature type="transmembrane region" description="Helical; Name=3" evidence="1">
    <location>
        <begin position="88"/>
        <end position="108"/>
    </location>
</feature>
<feature type="topological domain" description="Cytoplasmic" evidence="1">
    <location>
        <begin position="109"/>
        <end position="131"/>
    </location>
</feature>
<feature type="transmembrane region" description="Helical; Name=4" evidence="1">
    <location>
        <begin position="132"/>
        <end position="152"/>
    </location>
</feature>
<feature type="topological domain" description="Extracellular" evidence="1">
    <location>
        <begin position="153"/>
        <end position="172"/>
    </location>
</feature>
<feature type="transmembrane region" description="Helical; Name=5" evidence="1">
    <location>
        <begin position="173"/>
        <end position="193"/>
    </location>
</feature>
<feature type="topological domain" description="Cytoplasmic" evidence="1">
    <location>
        <begin position="194"/>
        <end position="304"/>
    </location>
</feature>
<feature type="transmembrane region" description="Helical; Name=6" evidence="1">
    <location>
        <begin position="305"/>
        <end position="325"/>
    </location>
</feature>
<feature type="topological domain" description="Extracellular" evidence="1">
    <location>
        <begin position="326"/>
        <end position="341"/>
    </location>
</feature>
<feature type="transmembrane region" description="Helical; Name=7" evidence="1">
    <location>
        <begin position="342"/>
        <end position="362"/>
    </location>
</feature>
<feature type="topological domain" description="Cytoplasmic" evidence="1">
    <location>
        <begin position="363"/>
        <end position="390"/>
    </location>
</feature>
<feature type="glycosylation site" description="N-linked (GlcNAc...) asparagine" evidence="1">
    <location>
        <position position="5"/>
    </location>
</feature>
<feature type="glycosylation site" description="N-linked (GlcNAc...) asparagine" evidence="1">
    <location>
        <position position="9"/>
    </location>
</feature>
<feature type="disulfide bond" evidence="2">
    <location>
        <begin position="87"/>
        <end position="164"/>
    </location>
</feature>
<feature type="splice variant" id="VSP_042737" description="In isoform 2." evidence="6">
    <location>
        <begin position="65"/>
        <end position="152"/>
    </location>
</feature>
<feature type="sequence variant" id="VAR_033477" description="In dbSNP:rs11665084." evidence="3">
    <original>A</original>
    <variation>V</variation>
    <location>
        <position position="138"/>
    </location>
</feature>
<feature type="sequence variant" id="VAR_033478" description="In dbSNP:rs11662595." evidence="3">
    <original>H</original>
    <variation>R</variation>
    <location>
        <position position="206"/>
    </location>
</feature>
<feature type="sequence conflict" description="In Ref. 1; BAB13698." evidence="7" ref="1">
    <original>Q</original>
    <variation>R</variation>
    <location>
        <position position="253"/>
    </location>
</feature>
<feature type="helix" evidence="10">
    <location>
        <begin position="12"/>
        <end position="42"/>
    </location>
</feature>
<feature type="helix" evidence="10">
    <location>
        <begin position="49"/>
        <end position="62"/>
    </location>
</feature>
<feature type="turn" evidence="10">
    <location>
        <begin position="63"/>
        <end position="67"/>
    </location>
</feature>
<feature type="helix" evidence="10">
    <location>
        <begin position="68"/>
        <end position="77"/>
    </location>
</feature>
<feature type="helix" evidence="10">
    <location>
        <begin position="84"/>
        <end position="117"/>
    </location>
</feature>
<feature type="helix" evidence="10">
    <location>
        <begin position="119"/>
        <end position="124"/>
    </location>
</feature>
<feature type="helix" evidence="10">
    <location>
        <begin position="129"/>
        <end position="154"/>
    </location>
</feature>
<feature type="helix" evidence="10">
    <location>
        <begin position="155"/>
        <end position="157"/>
    </location>
</feature>
<feature type="strand" evidence="9">
    <location>
        <begin position="160"/>
        <end position="162"/>
    </location>
</feature>
<feature type="strand" evidence="8">
    <location>
        <begin position="163"/>
        <end position="165"/>
    </location>
</feature>
<feature type="helix" evidence="10">
    <location>
        <begin position="167"/>
        <end position="169"/>
    </location>
</feature>
<feature type="helix" evidence="10">
    <location>
        <begin position="172"/>
        <end position="182"/>
    </location>
</feature>
<feature type="helix" evidence="10">
    <location>
        <begin position="184"/>
        <end position="199"/>
    </location>
</feature>
<feature type="helix" evidence="10">
    <location>
        <begin position="292"/>
        <end position="328"/>
    </location>
</feature>
<feature type="strand" evidence="10">
    <location>
        <begin position="332"/>
        <end position="334"/>
    </location>
</feature>
<feature type="helix" evidence="10">
    <location>
        <begin position="338"/>
        <end position="357"/>
    </location>
</feature>
<feature type="turn" evidence="10">
    <location>
        <begin position="358"/>
        <end position="361"/>
    </location>
</feature>
<feature type="helix" evidence="10">
    <location>
        <begin position="363"/>
        <end position="373"/>
    </location>
</feature>
<sequence>MPDTNSTINLSLSTRVTLAFFMSLVAFAIMLGNALVILAFVVDKNLRHRSSYFFLNLAISDFFVGVISIPLYIPHTLFEWDFGKEICVFWLTTDYLLCTASVYNIVLISYDRYLSVSNAVSYRTQHTGVLKIVTLMVAVWVLAFLVNGPMILVSESWKDEGSECEPGFFSEWYILAITSFLEFVIPVILVAYFNMNIYWSLWKRDHLSRCQSHPGLTAVSSNICGHSFRGRLSSRRSLSASTEVPASFHSERQRRKSSLMFSSRTKMNSNTIASKMGSFSQSDSVALHQREHVELLRARRLAKSLAILLGVFAVCWAPYSLFTIVLSFYSSATGPKSVWYRIAFWLQWFNSFVNPLLYPLCHKRFQKAFLKIFCIKKQPLPSQHSRSVSS</sequence>